<accession>B8DPL8</accession>
<gene>
    <name evidence="1" type="primary">rpsI</name>
    <name type="ordered locus">DvMF_0970</name>
</gene>
<reference key="1">
    <citation type="submission" date="2008-10" db="EMBL/GenBank/DDBJ databases">
        <title>Complete sequence of Desulfovibrio vulgaris str. 'Miyazaki F'.</title>
        <authorList>
            <person name="Lucas S."/>
            <person name="Copeland A."/>
            <person name="Lapidus A."/>
            <person name="Glavina del Rio T."/>
            <person name="Dalin E."/>
            <person name="Tice H."/>
            <person name="Bruce D."/>
            <person name="Goodwin L."/>
            <person name="Pitluck S."/>
            <person name="Sims D."/>
            <person name="Brettin T."/>
            <person name="Detter J.C."/>
            <person name="Han C."/>
            <person name="Larimer F."/>
            <person name="Land M."/>
            <person name="Hauser L."/>
            <person name="Kyrpides N."/>
            <person name="Mikhailova N."/>
            <person name="Hazen T.C."/>
            <person name="Richardson P."/>
        </authorList>
    </citation>
    <scope>NUCLEOTIDE SEQUENCE [LARGE SCALE GENOMIC DNA]</scope>
    <source>
        <strain>DSM 19637 / Miyazaki F</strain>
    </source>
</reference>
<protein>
    <recommendedName>
        <fullName evidence="1">Small ribosomal subunit protein uS9</fullName>
    </recommendedName>
    <alternativeName>
        <fullName evidence="3">30S ribosomal protein S9</fullName>
    </alternativeName>
</protein>
<feature type="chain" id="PRO_1000128115" description="Small ribosomal subunit protein uS9">
    <location>
        <begin position="1"/>
        <end position="130"/>
    </location>
</feature>
<feature type="region of interest" description="Disordered" evidence="2">
    <location>
        <begin position="109"/>
        <end position="130"/>
    </location>
</feature>
<organism>
    <name type="scientific">Nitratidesulfovibrio vulgaris (strain DSM 19637 / Miyazaki F)</name>
    <name type="common">Desulfovibrio vulgaris</name>
    <dbReference type="NCBI Taxonomy" id="883"/>
    <lineage>
        <taxon>Bacteria</taxon>
        <taxon>Pseudomonadati</taxon>
        <taxon>Thermodesulfobacteriota</taxon>
        <taxon>Desulfovibrionia</taxon>
        <taxon>Desulfovibrionales</taxon>
        <taxon>Desulfovibrionaceae</taxon>
        <taxon>Nitratidesulfovibrio</taxon>
    </lineage>
</organism>
<proteinExistence type="inferred from homology"/>
<dbReference type="EMBL" id="CP001197">
    <property type="protein sequence ID" value="ACL07925.1"/>
    <property type="molecule type" value="Genomic_DNA"/>
</dbReference>
<dbReference type="SMR" id="B8DPL8"/>
<dbReference type="STRING" id="883.DvMF_0970"/>
<dbReference type="KEGG" id="dvm:DvMF_0970"/>
<dbReference type="eggNOG" id="COG0103">
    <property type="taxonomic scope" value="Bacteria"/>
</dbReference>
<dbReference type="HOGENOM" id="CLU_046483_2_1_7"/>
<dbReference type="OrthoDB" id="9803965at2"/>
<dbReference type="GO" id="GO:0022627">
    <property type="term" value="C:cytosolic small ribosomal subunit"/>
    <property type="evidence" value="ECO:0007669"/>
    <property type="project" value="TreeGrafter"/>
</dbReference>
<dbReference type="GO" id="GO:0003723">
    <property type="term" value="F:RNA binding"/>
    <property type="evidence" value="ECO:0007669"/>
    <property type="project" value="TreeGrafter"/>
</dbReference>
<dbReference type="GO" id="GO:0003735">
    <property type="term" value="F:structural constituent of ribosome"/>
    <property type="evidence" value="ECO:0007669"/>
    <property type="project" value="InterPro"/>
</dbReference>
<dbReference type="GO" id="GO:0006412">
    <property type="term" value="P:translation"/>
    <property type="evidence" value="ECO:0007669"/>
    <property type="project" value="UniProtKB-UniRule"/>
</dbReference>
<dbReference type="FunFam" id="3.30.230.10:FF:000001">
    <property type="entry name" value="30S ribosomal protein S9"/>
    <property type="match status" value="1"/>
</dbReference>
<dbReference type="Gene3D" id="3.30.230.10">
    <property type="match status" value="1"/>
</dbReference>
<dbReference type="HAMAP" id="MF_00532_B">
    <property type="entry name" value="Ribosomal_uS9_B"/>
    <property type="match status" value="1"/>
</dbReference>
<dbReference type="InterPro" id="IPR020568">
    <property type="entry name" value="Ribosomal_Su5_D2-typ_SF"/>
</dbReference>
<dbReference type="InterPro" id="IPR000754">
    <property type="entry name" value="Ribosomal_uS9"/>
</dbReference>
<dbReference type="InterPro" id="IPR023035">
    <property type="entry name" value="Ribosomal_uS9_bac/plastid"/>
</dbReference>
<dbReference type="InterPro" id="IPR020574">
    <property type="entry name" value="Ribosomal_uS9_CS"/>
</dbReference>
<dbReference type="InterPro" id="IPR014721">
    <property type="entry name" value="Ribsml_uS5_D2-typ_fold_subgr"/>
</dbReference>
<dbReference type="NCBIfam" id="NF001099">
    <property type="entry name" value="PRK00132.1"/>
    <property type="match status" value="1"/>
</dbReference>
<dbReference type="PANTHER" id="PTHR21569">
    <property type="entry name" value="RIBOSOMAL PROTEIN S9"/>
    <property type="match status" value="1"/>
</dbReference>
<dbReference type="PANTHER" id="PTHR21569:SF1">
    <property type="entry name" value="SMALL RIBOSOMAL SUBUNIT PROTEIN US9M"/>
    <property type="match status" value="1"/>
</dbReference>
<dbReference type="Pfam" id="PF00380">
    <property type="entry name" value="Ribosomal_S9"/>
    <property type="match status" value="1"/>
</dbReference>
<dbReference type="SUPFAM" id="SSF54211">
    <property type="entry name" value="Ribosomal protein S5 domain 2-like"/>
    <property type="match status" value="1"/>
</dbReference>
<dbReference type="PROSITE" id="PS00360">
    <property type="entry name" value="RIBOSOMAL_S9"/>
    <property type="match status" value="1"/>
</dbReference>
<keyword id="KW-0687">Ribonucleoprotein</keyword>
<keyword id="KW-0689">Ribosomal protein</keyword>
<name>RS9_NITV9</name>
<comment type="similarity">
    <text evidence="1">Belongs to the universal ribosomal protein uS9 family.</text>
</comment>
<sequence length="130" mass="14803">MANEFNYGTGRRKTATARTRLYAGSGQIVVNGRPFEDYFPRKSLQMIIRQPLVLTKNVERFDIKVNVCGGGVTGQAEAVRHGISRALLELEPELRGALKRAGFLTRDARKKERKKYGQRAARARYQYSKR</sequence>
<evidence type="ECO:0000255" key="1">
    <source>
        <dbReference type="HAMAP-Rule" id="MF_00532"/>
    </source>
</evidence>
<evidence type="ECO:0000256" key="2">
    <source>
        <dbReference type="SAM" id="MobiDB-lite"/>
    </source>
</evidence>
<evidence type="ECO:0000305" key="3"/>